<evidence type="ECO:0000250" key="1"/>
<evidence type="ECO:0000305" key="2"/>
<feature type="signal peptide">
    <location>
        <begin position="1"/>
        <end position="23"/>
    </location>
</feature>
<feature type="chain" id="PRO_0000011666" description="Glycoprotein hormones alpha chain 2">
    <location>
        <begin position="24"/>
        <end position="118"/>
    </location>
</feature>
<feature type="glycosylation site" description="N-linked (GlcNAc...) asparagine" evidence="2">
    <location>
        <position position="79"/>
    </location>
</feature>
<feature type="glycosylation site" description="N-linked (GlcNAc...) asparagine" evidence="2">
    <location>
        <position position="104"/>
    </location>
</feature>
<feature type="disulfide bond" evidence="1">
    <location>
        <begin position="34"/>
        <end position="58"/>
    </location>
</feature>
<feature type="disulfide bond" evidence="1">
    <location>
        <begin position="37"/>
        <end position="87"/>
    </location>
</feature>
<feature type="disulfide bond" evidence="1">
    <location>
        <begin position="55"/>
        <end position="108"/>
    </location>
</feature>
<feature type="disulfide bond" evidence="1">
    <location>
        <begin position="59"/>
        <end position="110"/>
    </location>
</feature>
<feature type="disulfide bond" evidence="1">
    <location>
        <begin position="86"/>
        <end position="113"/>
    </location>
</feature>
<gene>
    <name type="primary">cgab</name>
    <name type="synonym">cgb</name>
</gene>
<name>GLHA2_CYPCA</name>
<dbReference type="EMBL" id="M37380">
    <property type="protein sequence ID" value="AAA49210.1"/>
    <property type="molecule type" value="mRNA"/>
</dbReference>
<dbReference type="PIR" id="A40554">
    <property type="entry name" value="A40554"/>
</dbReference>
<dbReference type="SMR" id="P18857"/>
<dbReference type="GlyCosmos" id="P18857">
    <property type="glycosylation" value="2 sites, No reported glycans"/>
</dbReference>
<dbReference type="Proteomes" id="UP000694384">
    <property type="component" value="Unplaced"/>
</dbReference>
<dbReference type="Proteomes" id="UP000694427">
    <property type="component" value="Unplaced"/>
</dbReference>
<dbReference type="Proteomes" id="UP000694700">
    <property type="component" value="Unplaced"/>
</dbReference>
<dbReference type="Proteomes" id="UP000694701">
    <property type="component" value="Unplaced"/>
</dbReference>
<dbReference type="Proteomes" id="UP001155660">
    <property type="component" value="Unplaced"/>
</dbReference>
<dbReference type="GO" id="GO:0005615">
    <property type="term" value="C:extracellular space"/>
    <property type="evidence" value="ECO:0007669"/>
    <property type="project" value="TreeGrafter"/>
</dbReference>
<dbReference type="GO" id="GO:0016914">
    <property type="term" value="C:follicle-stimulating hormone complex"/>
    <property type="evidence" value="ECO:0007669"/>
    <property type="project" value="TreeGrafter"/>
</dbReference>
<dbReference type="GO" id="GO:0016913">
    <property type="term" value="F:follicle-stimulating hormone activity"/>
    <property type="evidence" value="ECO:0007669"/>
    <property type="project" value="TreeGrafter"/>
</dbReference>
<dbReference type="GO" id="GO:0010893">
    <property type="term" value="P:positive regulation of steroid biosynthetic process"/>
    <property type="evidence" value="ECO:0007669"/>
    <property type="project" value="TreeGrafter"/>
</dbReference>
<dbReference type="GO" id="GO:0006590">
    <property type="term" value="P:thyroid hormone generation"/>
    <property type="evidence" value="ECO:0007669"/>
    <property type="project" value="TreeGrafter"/>
</dbReference>
<dbReference type="FunFam" id="2.10.90.10:FF:000011">
    <property type="entry name" value="Glycoprotein hormones alpha chain"/>
    <property type="match status" value="1"/>
</dbReference>
<dbReference type="Gene3D" id="2.10.90.10">
    <property type="entry name" value="Cystine-knot cytokines"/>
    <property type="match status" value="1"/>
</dbReference>
<dbReference type="InterPro" id="IPR029034">
    <property type="entry name" value="Cystine-knot_cytokine"/>
</dbReference>
<dbReference type="InterPro" id="IPR000476">
    <property type="entry name" value="Glyco_hormone"/>
</dbReference>
<dbReference type="PANTHER" id="PTHR11509">
    <property type="entry name" value="GLYCOPROTEIN HORMONE ALPHA CHAIN"/>
    <property type="match status" value="1"/>
</dbReference>
<dbReference type="PANTHER" id="PTHR11509:SF0">
    <property type="entry name" value="GLYCOPROTEIN HORMONES ALPHA CHAIN"/>
    <property type="match status" value="1"/>
</dbReference>
<dbReference type="Pfam" id="PF00236">
    <property type="entry name" value="Hormone_6"/>
    <property type="match status" value="1"/>
</dbReference>
<dbReference type="PRINTS" id="PR00274">
    <property type="entry name" value="GLYCOHORMONE"/>
</dbReference>
<dbReference type="SMART" id="SM00067">
    <property type="entry name" value="GHA"/>
    <property type="match status" value="1"/>
</dbReference>
<dbReference type="SUPFAM" id="SSF57501">
    <property type="entry name" value="Cystine-knot cytokines"/>
    <property type="match status" value="1"/>
</dbReference>
<dbReference type="PROSITE" id="PS00779">
    <property type="entry name" value="GLYCO_HORMONE_ALPHA_1"/>
    <property type="match status" value="1"/>
</dbReference>
<dbReference type="PROSITE" id="PS00780">
    <property type="entry name" value="GLYCO_HORMONE_ALPHA_2"/>
    <property type="match status" value="1"/>
</dbReference>
<dbReference type="PROSITE" id="PS50277">
    <property type="entry name" value="GLYCO_HORMONE_ALPHA_3"/>
    <property type="match status" value="1"/>
</dbReference>
<proteinExistence type="inferred from homology"/>
<sequence>MFWTRYAGASVLLFLMLIHLGQLYPRNYMNNFGCEECKLKENNIFSKPGAPVYQCMGCCFSRAYPTPLRSKKTMLVPKNITSEATCCVAKEFKQVLVNDIKLVNHTDCHCSTCYYHKS</sequence>
<protein>
    <recommendedName>
        <fullName>Glycoprotein hormones alpha chain 2</fullName>
    </recommendedName>
    <alternativeName>
        <fullName>GTH-alpha</fullName>
    </alternativeName>
    <alternativeName>
        <fullName>Gonadotropin alpha chain 2</fullName>
    </alternativeName>
</protein>
<organism>
    <name type="scientific">Cyprinus carpio</name>
    <name type="common">Common carp</name>
    <dbReference type="NCBI Taxonomy" id="7962"/>
    <lineage>
        <taxon>Eukaryota</taxon>
        <taxon>Metazoa</taxon>
        <taxon>Chordata</taxon>
        <taxon>Craniata</taxon>
        <taxon>Vertebrata</taxon>
        <taxon>Euteleostomi</taxon>
        <taxon>Actinopterygii</taxon>
        <taxon>Neopterygii</taxon>
        <taxon>Teleostei</taxon>
        <taxon>Ostariophysi</taxon>
        <taxon>Cypriniformes</taxon>
        <taxon>Cyprinidae</taxon>
        <taxon>Cyprininae</taxon>
        <taxon>Cyprinus</taxon>
    </lineage>
</organism>
<comment type="function">
    <text>Involved in gametogenesis and steroidogenesis.</text>
</comment>
<comment type="subunit">
    <text>Heterodimer of an alpha and a beta chain.</text>
</comment>
<comment type="subcellular location">
    <subcellularLocation>
        <location>Secreted</location>
    </subcellularLocation>
</comment>
<comment type="similarity">
    <text evidence="2">Belongs to the glycoprotein hormones subunit alpha family.</text>
</comment>
<accession>P18857</accession>
<keyword id="KW-1015">Disulfide bond</keyword>
<keyword id="KW-0325">Glycoprotein</keyword>
<keyword id="KW-0372">Hormone</keyword>
<keyword id="KW-1185">Reference proteome</keyword>
<keyword id="KW-0964">Secreted</keyword>
<keyword id="KW-0732">Signal</keyword>
<reference key="1">
    <citation type="journal article" date="1988" name="Int. J. Pept. Protein Res.">
        <title>Primary structures of carp gonadotropin subunits deduced from cDNA nucleotide sequences.</title>
        <authorList>
            <person name="Chang Y.S."/>
            <person name="Huang C.-J."/>
            <person name="Huang F.-L."/>
            <person name="Lo T.-B."/>
        </authorList>
    </citation>
    <scope>NUCLEOTIDE SEQUENCE [MRNA]</scope>
</reference>